<protein>
    <recommendedName>
        <fullName evidence="1">Endoribonuclease YbeY</fullName>
        <ecNumber evidence="1">3.1.-.-</ecNumber>
    </recommendedName>
</protein>
<reference key="1">
    <citation type="journal article" date="2010" name="Genome Biol.">
        <title>Structure and dynamics of the pan-genome of Streptococcus pneumoniae and closely related species.</title>
        <authorList>
            <person name="Donati C."/>
            <person name="Hiller N.L."/>
            <person name="Tettelin H."/>
            <person name="Muzzi A."/>
            <person name="Croucher N.J."/>
            <person name="Angiuoli S.V."/>
            <person name="Oggioni M."/>
            <person name="Dunning Hotopp J.C."/>
            <person name="Hu F.Z."/>
            <person name="Riley D.R."/>
            <person name="Covacci A."/>
            <person name="Mitchell T.J."/>
            <person name="Bentley S.D."/>
            <person name="Kilian M."/>
            <person name="Ehrlich G.D."/>
            <person name="Rappuoli R."/>
            <person name="Moxon E.R."/>
            <person name="Masignani V."/>
        </authorList>
    </citation>
    <scope>NUCLEOTIDE SEQUENCE [LARGE SCALE GENOMIC DNA]</scope>
    <source>
        <strain>Taiwan19F-14</strain>
    </source>
</reference>
<feature type="chain" id="PRO_1000200000" description="Endoribonuclease YbeY">
    <location>
        <begin position="1"/>
        <end position="165"/>
    </location>
</feature>
<feature type="binding site" evidence="1">
    <location>
        <position position="130"/>
    </location>
    <ligand>
        <name>Zn(2+)</name>
        <dbReference type="ChEBI" id="CHEBI:29105"/>
        <note>catalytic</note>
    </ligand>
</feature>
<feature type="binding site" evidence="1">
    <location>
        <position position="134"/>
    </location>
    <ligand>
        <name>Zn(2+)</name>
        <dbReference type="ChEBI" id="CHEBI:29105"/>
        <note>catalytic</note>
    </ligand>
</feature>
<feature type="binding site" evidence="1">
    <location>
        <position position="140"/>
    </location>
    <ligand>
        <name>Zn(2+)</name>
        <dbReference type="ChEBI" id="CHEBI:29105"/>
        <note>catalytic</note>
    </ligand>
</feature>
<name>YBEY_STRZT</name>
<dbReference type="EC" id="3.1.-.-" evidence="1"/>
<dbReference type="EMBL" id="CP000921">
    <property type="protein sequence ID" value="ACO23643.1"/>
    <property type="molecule type" value="Genomic_DNA"/>
</dbReference>
<dbReference type="RefSeq" id="WP_000275156.1">
    <property type="nucleotide sequence ID" value="NC_012469.1"/>
</dbReference>
<dbReference type="SMR" id="C1CRT3"/>
<dbReference type="GeneID" id="93739770"/>
<dbReference type="KEGG" id="snt:SPT_1236"/>
<dbReference type="HOGENOM" id="CLU_106710_3_0_9"/>
<dbReference type="GO" id="GO:0005737">
    <property type="term" value="C:cytoplasm"/>
    <property type="evidence" value="ECO:0007669"/>
    <property type="project" value="UniProtKB-SubCell"/>
</dbReference>
<dbReference type="GO" id="GO:0004222">
    <property type="term" value="F:metalloendopeptidase activity"/>
    <property type="evidence" value="ECO:0007669"/>
    <property type="project" value="InterPro"/>
</dbReference>
<dbReference type="GO" id="GO:0004521">
    <property type="term" value="F:RNA endonuclease activity"/>
    <property type="evidence" value="ECO:0007669"/>
    <property type="project" value="UniProtKB-UniRule"/>
</dbReference>
<dbReference type="GO" id="GO:0008270">
    <property type="term" value="F:zinc ion binding"/>
    <property type="evidence" value="ECO:0007669"/>
    <property type="project" value="UniProtKB-UniRule"/>
</dbReference>
<dbReference type="GO" id="GO:0006364">
    <property type="term" value="P:rRNA processing"/>
    <property type="evidence" value="ECO:0007669"/>
    <property type="project" value="UniProtKB-UniRule"/>
</dbReference>
<dbReference type="Gene3D" id="3.40.390.30">
    <property type="entry name" value="Metalloproteases ('zincins'), catalytic domain"/>
    <property type="match status" value="1"/>
</dbReference>
<dbReference type="HAMAP" id="MF_00009">
    <property type="entry name" value="Endoribonucl_YbeY"/>
    <property type="match status" value="1"/>
</dbReference>
<dbReference type="InterPro" id="IPR023091">
    <property type="entry name" value="MetalPrtase_cat_dom_sf_prd"/>
</dbReference>
<dbReference type="InterPro" id="IPR002036">
    <property type="entry name" value="YbeY"/>
</dbReference>
<dbReference type="InterPro" id="IPR020549">
    <property type="entry name" value="YbeY_CS"/>
</dbReference>
<dbReference type="NCBIfam" id="TIGR00043">
    <property type="entry name" value="rRNA maturation RNase YbeY"/>
    <property type="match status" value="1"/>
</dbReference>
<dbReference type="PANTHER" id="PTHR46986">
    <property type="entry name" value="ENDORIBONUCLEASE YBEY, CHLOROPLASTIC"/>
    <property type="match status" value="1"/>
</dbReference>
<dbReference type="PANTHER" id="PTHR46986:SF1">
    <property type="entry name" value="ENDORIBONUCLEASE YBEY, CHLOROPLASTIC"/>
    <property type="match status" value="1"/>
</dbReference>
<dbReference type="Pfam" id="PF02130">
    <property type="entry name" value="YbeY"/>
    <property type="match status" value="1"/>
</dbReference>
<dbReference type="SUPFAM" id="SSF55486">
    <property type="entry name" value="Metalloproteases ('zincins'), catalytic domain"/>
    <property type="match status" value="1"/>
</dbReference>
<dbReference type="PROSITE" id="PS01306">
    <property type="entry name" value="UPF0054"/>
    <property type="match status" value="1"/>
</dbReference>
<organism>
    <name type="scientific">Streptococcus pneumoniae (strain Taiwan19F-14)</name>
    <dbReference type="NCBI Taxonomy" id="487213"/>
    <lineage>
        <taxon>Bacteria</taxon>
        <taxon>Bacillati</taxon>
        <taxon>Bacillota</taxon>
        <taxon>Bacilli</taxon>
        <taxon>Lactobacillales</taxon>
        <taxon>Streptococcaceae</taxon>
        <taxon>Streptococcus</taxon>
    </lineage>
</organism>
<evidence type="ECO:0000255" key="1">
    <source>
        <dbReference type="HAMAP-Rule" id="MF_00009"/>
    </source>
</evidence>
<accession>C1CRT3</accession>
<gene>
    <name evidence="1" type="primary">ybeY</name>
    <name type="ordered locus">SPT_1236</name>
</gene>
<keyword id="KW-0963">Cytoplasm</keyword>
<keyword id="KW-0255">Endonuclease</keyword>
<keyword id="KW-0378">Hydrolase</keyword>
<keyword id="KW-0479">Metal-binding</keyword>
<keyword id="KW-0540">Nuclease</keyword>
<keyword id="KW-0690">Ribosome biogenesis</keyword>
<keyword id="KW-0698">rRNA processing</keyword>
<keyword id="KW-0862">Zinc</keyword>
<proteinExistence type="inferred from homology"/>
<comment type="function">
    <text evidence="1">Single strand-specific metallo-endoribonuclease involved in late-stage 70S ribosome quality control and in maturation of the 3' terminus of the 16S rRNA.</text>
</comment>
<comment type="cofactor">
    <cofactor evidence="1">
        <name>Zn(2+)</name>
        <dbReference type="ChEBI" id="CHEBI:29105"/>
    </cofactor>
    <text evidence="1">Binds 1 zinc ion.</text>
</comment>
<comment type="subcellular location">
    <subcellularLocation>
        <location evidence="1">Cytoplasm</location>
    </subcellularLocation>
</comment>
<comment type="similarity">
    <text evidence="1">Belongs to the endoribonuclease YbeY family.</text>
</comment>
<sequence length="165" mass="19245">MYIEMVDETGQVSKEMLQQTQEILEFAAQKLGKEDKEMAVTFVTNERSHELNLEYRDTDRPTDVISLEYKPELEIAFDEEDLLENPELAEMMSEFDAYIGELFISIDKAHEQAEEYGHSFEREMGFLAVHGFLHINGYDHYTPEEEAEMFGLQEEILTAYGLTRQ</sequence>